<reference key="1">
    <citation type="submission" date="2008-10" db="EMBL/GenBank/DDBJ databases">
        <title>The complete genome sequence of Helicobacter pylori strain P12.</title>
        <authorList>
            <person name="Fischer W."/>
            <person name="Windhager L."/>
            <person name="Karnholz A."/>
            <person name="Zeiller M."/>
            <person name="Zimmer R."/>
            <person name="Haas R."/>
        </authorList>
    </citation>
    <scope>NUCLEOTIDE SEQUENCE [LARGE SCALE GENOMIC DNA]</scope>
    <source>
        <strain>P12</strain>
    </source>
</reference>
<organism>
    <name type="scientific">Helicobacter pylori (strain P12)</name>
    <dbReference type="NCBI Taxonomy" id="570508"/>
    <lineage>
        <taxon>Bacteria</taxon>
        <taxon>Pseudomonadati</taxon>
        <taxon>Campylobacterota</taxon>
        <taxon>Epsilonproteobacteria</taxon>
        <taxon>Campylobacterales</taxon>
        <taxon>Helicobacteraceae</taxon>
        <taxon>Helicobacter</taxon>
    </lineage>
</organism>
<comment type="function">
    <text evidence="1">Specifically methylates position 2 of adenine 2503 in 23S rRNA and position 2 of adenine 37 in tRNAs. m2A2503 modification seems to play a crucial role in the proofreading step occurring at the peptidyl transferase center and thus would serve to optimize ribosomal fidelity.</text>
</comment>
<comment type="catalytic activity">
    <reaction evidence="1">
        <text>adenosine(2503) in 23S rRNA + 2 reduced [2Fe-2S]-[ferredoxin] + 2 S-adenosyl-L-methionine = 2-methyladenosine(2503) in 23S rRNA + 5'-deoxyadenosine + L-methionine + 2 oxidized [2Fe-2S]-[ferredoxin] + S-adenosyl-L-homocysteine</text>
        <dbReference type="Rhea" id="RHEA:42916"/>
        <dbReference type="Rhea" id="RHEA-COMP:10000"/>
        <dbReference type="Rhea" id="RHEA-COMP:10001"/>
        <dbReference type="Rhea" id="RHEA-COMP:10152"/>
        <dbReference type="Rhea" id="RHEA-COMP:10282"/>
        <dbReference type="ChEBI" id="CHEBI:17319"/>
        <dbReference type="ChEBI" id="CHEBI:33737"/>
        <dbReference type="ChEBI" id="CHEBI:33738"/>
        <dbReference type="ChEBI" id="CHEBI:57844"/>
        <dbReference type="ChEBI" id="CHEBI:57856"/>
        <dbReference type="ChEBI" id="CHEBI:59789"/>
        <dbReference type="ChEBI" id="CHEBI:74411"/>
        <dbReference type="ChEBI" id="CHEBI:74497"/>
        <dbReference type="EC" id="2.1.1.192"/>
    </reaction>
</comment>
<comment type="catalytic activity">
    <reaction evidence="1">
        <text>adenosine(37) in tRNA + 2 reduced [2Fe-2S]-[ferredoxin] + 2 S-adenosyl-L-methionine = 2-methyladenosine(37) in tRNA + 5'-deoxyadenosine + L-methionine + 2 oxidized [2Fe-2S]-[ferredoxin] + S-adenosyl-L-homocysteine</text>
        <dbReference type="Rhea" id="RHEA:43332"/>
        <dbReference type="Rhea" id="RHEA-COMP:10000"/>
        <dbReference type="Rhea" id="RHEA-COMP:10001"/>
        <dbReference type="Rhea" id="RHEA-COMP:10162"/>
        <dbReference type="Rhea" id="RHEA-COMP:10485"/>
        <dbReference type="ChEBI" id="CHEBI:17319"/>
        <dbReference type="ChEBI" id="CHEBI:33737"/>
        <dbReference type="ChEBI" id="CHEBI:33738"/>
        <dbReference type="ChEBI" id="CHEBI:57844"/>
        <dbReference type="ChEBI" id="CHEBI:57856"/>
        <dbReference type="ChEBI" id="CHEBI:59789"/>
        <dbReference type="ChEBI" id="CHEBI:74411"/>
        <dbReference type="ChEBI" id="CHEBI:74497"/>
        <dbReference type="EC" id="2.1.1.192"/>
    </reaction>
</comment>
<comment type="cofactor">
    <cofactor evidence="1">
        <name>[4Fe-4S] cluster</name>
        <dbReference type="ChEBI" id="CHEBI:49883"/>
    </cofactor>
    <text evidence="1">Binds 1 [4Fe-4S] cluster. The cluster is coordinated with 3 cysteines and an exchangeable S-adenosyl-L-methionine.</text>
</comment>
<comment type="subcellular location">
    <subcellularLocation>
        <location evidence="1">Cytoplasm</location>
    </subcellularLocation>
</comment>
<comment type="miscellaneous">
    <text evidence="1">Reaction proceeds by a ping-pong mechanism involving intermediate methylation of a conserved cysteine residue.</text>
</comment>
<comment type="similarity">
    <text evidence="1">Belongs to the radical SAM superfamily. RlmN family.</text>
</comment>
<accession>B6JNS0</accession>
<feature type="chain" id="PRO_1000188579" description="Dual-specificity RNA methyltransferase RlmN">
    <location>
        <begin position="1"/>
        <end position="357"/>
    </location>
</feature>
<feature type="domain" description="Radical SAM core" evidence="2">
    <location>
        <begin position="109"/>
        <end position="340"/>
    </location>
</feature>
<feature type="active site" description="Proton acceptor" evidence="1">
    <location>
        <position position="89"/>
    </location>
</feature>
<feature type="active site" description="S-methylcysteine intermediate" evidence="1">
    <location>
        <position position="345"/>
    </location>
</feature>
<feature type="binding site" evidence="1">
    <location>
        <position position="123"/>
    </location>
    <ligand>
        <name>[4Fe-4S] cluster</name>
        <dbReference type="ChEBI" id="CHEBI:49883"/>
        <note>4Fe-4S-S-AdoMet</note>
    </ligand>
</feature>
<feature type="binding site" evidence="1">
    <location>
        <position position="127"/>
    </location>
    <ligand>
        <name>[4Fe-4S] cluster</name>
        <dbReference type="ChEBI" id="CHEBI:49883"/>
        <note>4Fe-4S-S-AdoMet</note>
    </ligand>
</feature>
<feature type="binding site" evidence="1">
    <location>
        <position position="130"/>
    </location>
    <ligand>
        <name>[4Fe-4S] cluster</name>
        <dbReference type="ChEBI" id="CHEBI:49883"/>
        <note>4Fe-4S-S-AdoMet</note>
    </ligand>
</feature>
<feature type="binding site" evidence="1">
    <location>
        <begin position="173"/>
        <end position="174"/>
    </location>
    <ligand>
        <name>S-adenosyl-L-methionine</name>
        <dbReference type="ChEBI" id="CHEBI:59789"/>
    </ligand>
</feature>
<feature type="binding site" evidence="1">
    <location>
        <position position="203"/>
    </location>
    <ligand>
        <name>S-adenosyl-L-methionine</name>
        <dbReference type="ChEBI" id="CHEBI:59789"/>
    </ligand>
</feature>
<feature type="binding site" evidence="1">
    <location>
        <begin position="226"/>
        <end position="228"/>
    </location>
    <ligand>
        <name>S-adenosyl-L-methionine</name>
        <dbReference type="ChEBI" id="CHEBI:59789"/>
    </ligand>
</feature>
<feature type="binding site" evidence="1">
    <location>
        <position position="302"/>
    </location>
    <ligand>
        <name>S-adenosyl-L-methionine</name>
        <dbReference type="ChEBI" id="CHEBI:59789"/>
    </ligand>
</feature>
<feature type="disulfide bond" description="(transient)" evidence="1">
    <location>
        <begin position="116"/>
        <end position="345"/>
    </location>
</feature>
<name>RLMN_HELP2</name>
<evidence type="ECO:0000255" key="1">
    <source>
        <dbReference type="HAMAP-Rule" id="MF_01849"/>
    </source>
</evidence>
<evidence type="ECO:0000255" key="2">
    <source>
        <dbReference type="PROSITE-ProRule" id="PRU01266"/>
    </source>
</evidence>
<keyword id="KW-0004">4Fe-4S</keyword>
<keyword id="KW-0963">Cytoplasm</keyword>
<keyword id="KW-1015">Disulfide bond</keyword>
<keyword id="KW-0408">Iron</keyword>
<keyword id="KW-0411">Iron-sulfur</keyword>
<keyword id="KW-0479">Metal-binding</keyword>
<keyword id="KW-0489">Methyltransferase</keyword>
<keyword id="KW-0698">rRNA processing</keyword>
<keyword id="KW-0949">S-adenosyl-L-methionine</keyword>
<keyword id="KW-0808">Transferase</keyword>
<keyword id="KW-0819">tRNA processing</keyword>
<sequence length="357" mass="40701">MKASIYDFTLKELSQLLKPSFRAKQLYLWLYAKYKTSFKDMQNNFSKDFIAYLEREFTLRTIEITHVRESVDGSKKYLFKSLRDNHTFEAVLLKMKDKKIDKETNAILEGEKYTVCVSCQIGCQVGCAFCFTQKGGFVRNLKASEIIQQALLIKEDNNLPIEKALNIVFMGMGEPLNNLDEVCKAIEIFNTGMQISPKRITISTSGVADKIPILAGKNLGVQLAISLHAVDDKTRSSLMPLNKKYNIECVLNEVKKWPLEQRKRVMFEYLLIKDLNDGLDCAKKLLKLLNGIKSKVNLILFNPHEGSKFERPSLESARMFADFLNSKGLLCTIRESKALDIEAACGQLREKKLSQQI</sequence>
<gene>
    <name evidence="1" type="primary">rlmN</name>
    <name type="ordered locus">HPP12_1400</name>
</gene>
<dbReference type="EC" id="2.1.1.192" evidence="1"/>
<dbReference type="EMBL" id="CP001217">
    <property type="protein sequence ID" value="ACJ08548.1"/>
    <property type="molecule type" value="Genomic_DNA"/>
</dbReference>
<dbReference type="SMR" id="B6JNS0"/>
<dbReference type="KEGG" id="hpp:HPP12_1400"/>
<dbReference type="HOGENOM" id="CLU_029101_2_0_7"/>
<dbReference type="Proteomes" id="UP000008198">
    <property type="component" value="Chromosome"/>
</dbReference>
<dbReference type="GO" id="GO:0005737">
    <property type="term" value="C:cytoplasm"/>
    <property type="evidence" value="ECO:0007669"/>
    <property type="project" value="UniProtKB-SubCell"/>
</dbReference>
<dbReference type="GO" id="GO:0051539">
    <property type="term" value="F:4 iron, 4 sulfur cluster binding"/>
    <property type="evidence" value="ECO:0007669"/>
    <property type="project" value="UniProtKB-UniRule"/>
</dbReference>
<dbReference type="GO" id="GO:0046872">
    <property type="term" value="F:metal ion binding"/>
    <property type="evidence" value="ECO:0007669"/>
    <property type="project" value="UniProtKB-KW"/>
</dbReference>
<dbReference type="GO" id="GO:0070040">
    <property type="term" value="F:rRNA (adenine(2503)-C2-)-methyltransferase activity"/>
    <property type="evidence" value="ECO:0007669"/>
    <property type="project" value="UniProtKB-UniRule"/>
</dbReference>
<dbReference type="GO" id="GO:0019843">
    <property type="term" value="F:rRNA binding"/>
    <property type="evidence" value="ECO:0007669"/>
    <property type="project" value="UniProtKB-UniRule"/>
</dbReference>
<dbReference type="GO" id="GO:0002935">
    <property type="term" value="F:tRNA (adenine(37)-C2)-methyltransferase activity"/>
    <property type="evidence" value="ECO:0007669"/>
    <property type="project" value="UniProtKB-UniRule"/>
</dbReference>
<dbReference type="GO" id="GO:0000049">
    <property type="term" value="F:tRNA binding"/>
    <property type="evidence" value="ECO:0007669"/>
    <property type="project" value="UniProtKB-UniRule"/>
</dbReference>
<dbReference type="GO" id="GO:0070475">
    <property type="term" value="P:rRNA base methylation"/>
    <property type="evidence" value="ECO:0007669"/>
    <property type="project" value="UniProtKB-UniRule"/>
</dbReference>
<dbReference type="GO" id="GO:0030488">
    <property type="term" value="P:tRNA methylation"/>
    <property type="evidence" value="ECO:0007669"/>
    <property type="project" value="UniProtKB-UniRule"/>
</dbReference>
<dbReference type="CDD" id="cd01335">
    <property type="entry name" value="Radical_SAM"/>
    <property type="match status" value="1"/>
</dbReference>
<dbReference type="FunFam" id="3.20.20.70:FF:000014">
    <property type="entry name" value="Probable dual-specificity RNA methyltransferase RlmN"/>
    <property type="match status" value="1"/>
</dbReference>
<dbReference type="Gene3D" id="1.10.150.530">
    <property type="match status" value="1"/>
</dbReference>
<dbReference type="Gene3D" id="3.20.20.70">
    <property type="entry name" value="Aldolase class I"/>
    <property type="match status" value="1"/>
</dbReference>
<dbReference type="HAMAP" id="MF_01849">
    <property type="entry name" value="RNA_methyltr_RlmN"/>
    <property type="match status" value="1"/>
</dbReference>
<dbReference type="InterPro" id="IPR013785">
    <property type="entry name" value="Aldolase_TIM"/>
</dbReference>
<dbReference type="InterPro" id="IPR040072">
    <property type="entry name" value="Methyltransferase_A"/>
</dbReference>
<dbReference type="InterPro" id="IPR048641">
    <property type="entry name" value="RlmN_N"/>
</dbReference>
<dbReference type="InterPro" id="IPR027492">
    <property type="entry name" value="RNA_MTrfase_RlmN"/>
</dbReference>
<dbReference type="InterPro" id="IPR004383">
    <property type="entry name" value="rRNA_lsu_MTrfase_RlmN/Cfr"/>
</dbReference>
<dbReference type="InterPro" id="IPR007197">
    <property type="entry name" value="rSAM"/>
</dbReference>
<dbReference type="NCBIfam" id="TIGR00048">
    <property type="entry name" value="rRNA_mod_RlmN"/>
    <property type="match status" value="1"/>
</dbReference>
<dbReference type="PANTHER" id="PTHR30544">
    <property type="entry name" value="23S RRNA METHYLTRANSFERASE"/>
    <property type="match status" value="1"/>
</dbReference>
<dbReference type="PANTHER" id="PTHR30544:SF5">
    <property type="entry name" value="RADICAL SAM CORE DOMAIN-CONTAINING PROTEIN"/>
    <property type="match status" value="1"/>
</dbReference>
<dbReference type="Pfam" id="PF04055">
    <property type="entry name" value="Radical_SAM"/>
    <property type="match status" value="1"/>
</dbReference>
<dbReference type="Pfam" id="PF21016">
    <property type="entry name" value="RlmN_N"/>
    <property type="match status" value="1"/>
</dbReference>
<dbReference type="PIRSF" id="PIRSF006004">
    <property type="entry name" value="CHP00048"/>
    <property type="match status" value="1"/>
</dbReference>
<dbReference type="SFLD" id="SFLDF00275">
    <property type="entry name" value="adenosine_C2_methyltransferase"/>
    <property type="match status" value="1"/>
</dbReference>
<dbReference type="SFLD" id="SFLDS00029">
    <property type="entry name" value="Radical_SAM"/>
    <property type="match status" value="1"/>
</dbReference>
<dbReference type="SUPFAM" id="SSF102114">
    <property type="entry name" value="Radical SAM enzymes"/>
    <property type="match status" value="1"/>
</dbReference>
<dbReference type="PROSITE" id="PS51918">
    <property type="entry name" value="RADICAL_SAM"/>
    <property type="match status" value="1"/>
</dbReference>
<proteinExistence type="inferred from homology"/>
<protein>
    <recommendedName>
        <fullName evidence="1">Dual-specificity RNA methyltransferase RlmN</fullName>
        <ecNumber evidence="1">2.1.1.192</ecNumber>
    </recommendedName>
    <alternativeName>
        <fullName evidence="1">23S rRNA (adenine(2503)-C(2))-methyltransferase</fullName>
    </alternativeName>
    <alternativeName>
        <fullName evidence="1">23S rRNA m2A2503 methyltransferase</fullName>
    </alternativeName>
    <alternativeName>
        <fullName evidence="1">Ribosomal RNA large subunit methyltransferase N</fullName>
    </alternativeName>
    <alternativeName>
        <fullName evidence="1">tRNA (adenine(37)-C(2))-methyltransferase</fullName>
    </alternativeName>
    <alternativeName>
        <fullName evidence="1">tRNA m2A37 methyltransferase</fullName>
    </alternativeName>
</protein>